<keyword id="KW-0002">3D-structure</keyword>
<keyword id="KW-0067">ATP-binding</keyword>
<keyword id="KW-0235">DNA replication</keyword>
<keyword id="KW-0240">DNA-directed RNA polymerase</keyword>
<keyword id="KW-0479">Metal-binding</keyword>
<keyword id="KW-0547">Nucleotide-binding</keyword>
<keyword id="KW-0548">Nucleotidyltransferase</keyword>
<keyword id="KW-0639">Primosome</keyword>
<keyword id="KW-1185">Reference proteome</keyword>
<keyword id="KW-0804">Transcription</keyword>
<keyword id="KW-0808">Transferase</keyword>
<keyword id="KW-0862">Zinc</keyword>
<feature type="chain" id="PRO_0000046736" description="DNA primase small subunit">
    <location>
        <begin position="1"/>
        <end position="409"/>
    </location>
</feature>
<feature type="short sequence motif" description="Zinc knuckle motif">
    <location>
        <begin position="123"/>
        <end position="133"/>
    </location>
</feature>
<feature type="active site" evidence="2">
    <location>
        <position position="46"/>
    </location>
</feature>
<feature type="active site" evidence="2">
    <location>
        <position position="111"/>
    </location>
</feature>
<feature type="active site" evidence="2">
    <location>
        <position position="113"/>
    </location>
</feature>
<feature type="mutagenesis site" description="Temperature-sensitive." evidence="4">
    <original>R</original>
    <variation>Q</variation>
    <location>
        <position position="184"/>
    </location>
</feature>
<feature type="mutagenesis site" description="Cold-sensitive." evidence="4">
    <original>E</original>
    <variation>K</variation>
    <location>
        <position position="316"/>
    </location>
</feature>
<feature type="sequence conflict" description="In Ref. 1; CAA68513." evidence="6" ref="1">
    <original>EQ</original>
    <variation>DE</variation>
    <location>
        <begin position="231"/>
        <end position="232"/>
    </location>
</feature>
<feature type="helix" evidence="8">
    <location>
        <begin position="12"/>
        <end position="21"/>
    </location>
</feature>
<feature type="helix" evidence="8">
    <location>
        <begin position="25"/>
        <end position="33"/>
    </location>
</feature>
<feature type="strand" evidence="8">
    <location>
        <begin position="34"/>
        <end position="37"/>
    </location>
</feature>
<feature type="helix" evidence="8">
    <location>
        <begin position="40"/>
        <end position="43"/>
    </location>
</feature>
<feature type="strand" evidence="8">
    <location>
        <begin position="45"/>
        <end position="50"/>
    </location>
</feature>
<feature type="strand" evidence="8">
    <location>
        <begin position="56"/>
        <end position="60"/>
    </location>
</feature>
<feature type="helix" evidence="8">
    <location>
        <begin position="65"/>
        <end position="75"/>
    </location>
</feature>
<feature type="strand" evidence="8">
    <location>
        <begin position="78"/>
        <end position="88"/>
    </location>
</feature>
<feature type="helix" evidence="8">
    <location>
        <begin position="90"/>
        <end position="92"/>
    </location>
</feature>
<feature type="strand" evidence="8">
    <location>
        <begin position="103"/>
        <end position="105"/>
    </location>
</feature>
<feature type="strand" evidence="8">
    <location>
        <begin position="108"/>
        <end position="113"/>
    </location>
</feature>
<feature type="helix" evidence="8">
    <location>
        <begin position="114"/>
        <end position="117"/>
    </location>
</feature>
<feature type="turn" evidence="8">
    <location>
        <begin position="118"/>
        <end position="120"/>
    </location>
</feature>
<feature type="helix" evidence="8">
    <location>
        <begin position="131"/>
        <end position="150"/>
    </location>
</feature>
<feature type="strand" evidence="8">
    <location>
        <begin position="157"/>
        <end position="161"/>
    </location>
</feature>
<feature type="strand" evidence="8">
    <location>
        <begin position="163"/>
        <end position="171"/>
    </location>
</feature>
<feature type="helix" evidence="8">
    <location>
        <begin position="174"/>
        <end position="177"/>
    </location>
</feature>
<feature type="helix" evidence="8">
    <location>
        <begin position="181"/>
        <end position="191"/>
    </location>
</feature>
<feature type="strand" evidence="8">
    <location>
        <begin position="199"/>
        <end position="201"/>
    </location>
</feature>
<feature type="helix" evidence="8">
    <location>
        <begin position="211"/>
        <end position="220"/>
    </location>
</feature>
<feature type="helix" evidence="8">
    <location>
        <begin position="221"/>
        <end position="223"/>
    </location>
</feature>
<feature type="helix" evidence="8">
    <location>
        <begin position="224"/>
        <end position="227"/>
    </location>
</feature>
<feature type="helix" evidence="8">
    <location>
        <begin position="228"/>
        <end position="232"/>
    </location>
</feature>
<feature type="helix" evidence="8">
    <location>
        <begin position="238"/>
        <end position="244"/>
    </location>
</feature>
<feature type="helix" evidence="8">
    <location>
        <begin position="246"/>
        <end position="248"/>
    </location>
</feature>
<feature type="helix" evidence="8">
    <location>
        <begin position="252"/>
        <end position="264"/>
    </location>
</feature>
<feature type="helix" evidence="8">
    <location>
        <begin position="270"/>
        <end position="285"/>
    </location>
</feature>
<feature type="strand" evidence="8">
    <location>
        <begin position="287"/>
        <end position="289"/>
    </location>
</feature>
<feature type="helix" evidence="8">
    <location>
        <begin position="290"/>
        <end position="309"/>
    </location>
</feature>
<feature type="helix" evidence="8">
    <location>
        <begin position="315"/>
        <end position="319"/>
    </location>
</feature>
<feature type="turn" evidence="8">
    <location>
        <begin position="333"/>
        <end position="335"/>
    </location>
</feature>
<feature type="helix" evidence="8">
    <location>
        <begin position="348"/>
        <end position="350"/>
    </location>
</feature>
<feature type="helix" evidence="8">
    <location>
        <begin position="354"/>
        <end position="363"/>
    </location>
</feature>
<feature type="helix" evidence="7">
    <location>
        <begin position="367"/>
        <end position="369"/>
    </location>
</feature>
<feature type="helix" evidence="8">
    <location>
        <begin position="373"/>
        <end position="401"/>
    </location>
</feature>
<comment type="function">
    <text>DNA primase is the polymerase that synthesizes small RNA primers for the Okazaki fragments made during discontinuous DNA replication. In a complex with DNA polymerase alpha (DNA polymerase alpha:primase) constitutes a replicative polymerase. Both primase components participate in formation of the active center, but the ATP-binding site is exclusively located on p48.</text>
</comment>
<comment type="subunit">
    <text evidence="5">DNA polymerase alpha:primase is a four subunit enzyme complex, which is assembled throughout the cell cycle, and consists of the two DNA polymerase subunits A POL1 and B POL12, and the DNA primase large PRI2 and small PRI1 subunits.</text>
</comment>
<comment type="miscellaneous">
    <text evidence="1">The bound zinc ion is not a cofactor. It is bound to a zinc knuckle motif that may be involved in sequence recognition and the binding of ssDNA (By similarity).</text>
</comment>
<comment type="miscellaneous">
    <text evidence="3">Present with 197 molecules/cell in log phase SD medium.</text>
</comment>
<comment type="similarity">
    <text evidence="6">Belongs to the eukaryotic-type primase small subunit family.</text>
</comment>
<proteinExistence type="evidence at protein level"/>
<accession>P10363</accession>
<accession>D6VVT8</accession>
<dbReference type="EC" id="2.7.7.-"/>
<dbReference type="EMBL" id="Z37996">
    <property type="protein sequence ID" value="CAA86078.1"/>
    <property type="molecule type" value="Genomic_DNA"/>
</dbReference>
<dbReference type="EMBL" id="X79743">
    <property type="protein sequence ID" value="CAB38098.1"/>
    <property type="molecule type" value="Genomic_DNA"/>
</dbReference>
<dbReference type="EMBL" id="Y00458">
    <property type="protein sequence ID" value="CAA68513.1"/>
    <property type="molecule type" value="Genomic_DNA"/>
</dbReference>
<dbReference type="EMBL" id="AY692859">
    <property type="protein sequence ID" value="AAT92878.1"/>
    <property type="molecule type" value="Genomic_DNA"/>
</dbReference>
<dbReference type="EMBL" id="BK006942">
    <property type="protein sequence ID" value="DAA08554.1"/>
    <property type="molecule type" value="Genomic_DNA"/>
</dbReference>
<dbReference type="PIR" id="S48352">
    <property type="entry name" value="S48352"/>
</dbReference>
<dbReference type="RefSeq" id="NP_012273.1">
    <property type="nucleotide sequence ID" value="NM_001179530.1"/>
</dbReference>
<dbReference type="PDB" id="4LIM">
    <property type="method" value="X-ray"/>
    <property type="resolution" value="1.63 A"/>
    <property type="chains" value="A=8-396"/>
</dbReference>
<dbReference type="PDB" id="4MM2">
    <property type="method" value="X-ray"/>
    <property type="resolution" value="1.60 A"/>
    <property type="chains" value="A/B=1-409"/>
</dbReference>
<dbReference type="PDB" id="8B9A">
    <property type="method" value="EM"/>
    <property type="resolution" value="3.50 A"/>
    <property type="chains" value="S=1-409"/>
</dbReference>
<dbReference type="PDB" id="8B9B">
    <property type="method" value="EM"/>
    <property type="resolution" value="3.50 A"/>
    <property type="chains" value="S=1-409"/>
</dbReference>
<dbReference type="PDB" id="8B9C">
    <property type="method" value="EM"/>
    <property type="resolution" value="4.60 A"/>
    <property type="chains" value="S=1-409"/>
</dbReference>
<dbReference type="PDB" id="8FOC">
    <property type="method" value="EM"/>
    <property type="resolution" value="3.70 A"/>
    <property type="chains" value="A=1-409"/>
</dbReference>
<dbReference type="PDB" id="8FOD">
    <property type="method" value="EM"/>
    <property type="resolution" value="3.80 A"/>
    <property type="chains" value="A=1-409"/>
</dbReference>
<dbReference type="PDB" id="8FOE">
    <property type="method" value="EM"/>
    <property type="resolution" value="5.60 A"/>
    <property type="chains" value="A=1-409"/>
</dbReference>
<dbReference type="PDB" id="8FOH">
    <property type="method" value="EM"/>
    <property type="resolution" value="4.93 A"/>
    <property type="chains" value="A=1-409"/>
</dbReference>
<dbReference type="PDB" id="8FOJ">
    <property type="method" value="EM"/>
    <property type="resolution" value="4.80 A"/>
    <property type="chains" value="A=1-409"/>
</dbReference>
<dbReference type="PDB" id="8FOK">
    <property type="method" value="EM"/>
    <property type="resolution" value="3.56 A"/>
    <property type="chains" value="A=1-409"/>
</dbReference>
<dbReference type="PDBsum" id="4LIM"/>
<dbReference type="PDBsum" id="4MM2"/>
<dbReference type="PDBsum" id="8B9A"/>
<dbReference type="PDBsum" id="8B9B"/>
<dbReference type="PDBsum" id="8B9C"/>
<dbReference type="PDBsum" id="8FOC"/>
<dbReference type="PDBsum" id="8FOD"/>
<dbReference type="PDBsum" id="8FOE"/>
<dbReference type="PDBsum" id="8FOH"/>
<dbReference type="PDBsum" id="8FOJ"/>
<dbReference type="PDBsum" id="8FOK"/>
<dbReference type="EMDB" id="EMD-15924"/>
<dbReference type="SMR" id="P10363"/>
<dbReference type="BioGRID" id="35000">
    <property type="interactions" value="331"/>
</dbReference>
<dbReference type="ComplexPortal" id="CPX-2091">
    <property type="entry name" value="DNA polymerase alpha:primase complex"/>
</dbReference>
<dbReference type="DIP" id="DIP-2534N"/>
<dbReference type="FunCoup" id="P10363">
    <property type="interactions" value="1552"/>
</dbReference>
<dbReference type="IntAct" id="P10363">
    <property type="interactions" value="7"/>
</dbReference>
<dbReference type="MINT" id="P10363"/>
<dbReference type="STRING" id="4932.YIR008C"/>
<dbReference type="iPTMnet" id="P10363"/>
<dbReference type="PaxDb" id="4932-YIR008C"/>
<dbReference type="PeptideAtlas" id="P10363"/>
<dbReference type="EnsemblFungi" id="YIR008C_mRNA">
    <property type="protein sequence ID" value="YIR008C"/>
    <property type="gene ID" value="YIR008C"/>
</dbReference>
<dbReference type="GeneID" id="854825"/>
<dbReference type="KEGG" id="sce:YIR008C"/>
<dbReference type="AGR" id="SGD:S000001447"/>
<dbReference type="SGD" id="S000001447">
    <property type="gene designation" value="PRI1"/>
</dbReference>
<dbReference type="VEuPathDB" id="FungiDB:YIR008C"/>
<dbReference type="eggNOG" id="KOG2851">
    <property type="taxonomic scope" value="Eukaryota"/>
</dbReference>
<dbReference type="GeneTree" id="ENSGT00390000011466"/>
<dbReference type="HOGENOM" id="CLU_028288_1_0_1"/>
<dbReference type="InParanoid" id="P10363"/>
<dbReference type="OMA" id="NVTRGFN"/>
<dbReference type="OrthoDB" id="19606at2759"/>
<dbReference type="BioCyc" id="YEAST:G3O-31429-MONOMER"/>
<dbReference type="BRENDA" id="2.7.7.102">
    <property type="organism ID" value="984"/>
</dbReference>
<dbReference type="Reactome" id="R-SCE-113501">
    <property type="pathway name" value="Inhibition of replication initiation of damaged DNA by RB1/E2F1"/>
</dbReference>
<dbReference type="Reactome" id="R-SCE-68952">
    <property type="pathway name" value="DNA replication initiation"/>
</dbReference>
<dbReference type="Reactome" id="R-SCE-68962">
    <property type="pathway name" value="Activation of the pre-replicative complex"/>
</dbReference>
<dbReference type="Reactome" id="R-SCE-69091">
    <property type="pathway name" value="Polymerase switching"/>
</dbReference>
<dbReference type="Reactome" id="R-SCE-69166">
    <property type="pathway name" value="Removal of the Flap Intermediate"/>
</dbReference>
<dbReference type="Reactome" id="R-SCE-69183">
    <property type="pathway name" value="Processive synthesis on the lagging strand"/>
</dbReference>
<dbReference type="BioGRID-ORCS" id="854825">
    <property type="hits" value="0 hits in 10 CRISPR screens"/>
</dbReference>
<dbReference type="CD-CODE" id="E03F929F">
    <property type="entry name" value="Stress granule"/>
</dbReference>
<dbReference type="EvolutionaryTrace" id="P10363"/>
<dbReference type="PRO" id="PR:P10363"/>
<dbReference type="Proteomes" id="UP000002311">
    <property type="component" value="Chromosome IX"/>
</dbReference>
<dbReference type="RNAct" id="P10363">
    <property type="molecule type" value="protein"/>
</dbReference>
<dbReference type="GO" id="GO:0005658">
    <property type="term" value="C:alpha DNA polymerase:primase complex"/>
    <property type="evidence" value="ECO:0000314"/>
    <property type="project" value="SGD"/>
</dbReference>
<dbReference type="GO" id="GO:0043596">
    <property type="term" value="C:nuclear replication fork"/>
    <property type="evidence" value="ECO:0000314"/>
    <property type="project" value="SGD"/>
</dbReference>
<dbReference type="GO" id="GO:0005524">
    <property type="term" value="F:ATP binding"/>
    <property type="evidence" value="ECO:0007669"/>
    <property type="project" value="UniProtKB-KW"/>
</dbReference>
<dbReference type="GO" id="GO:0003899">
    <property type="term" value="F:DNA-directed RNA polymerase activity"/>
    <property type="evidence" value="ECO:0000315"/>
    <property type="project" value="SGD"/>
</dbReference>
<dbReference type="GO" id="GO:0046872">
    <property type="term" value="F:metal ion binding"/>
    <property type="evidence" value="ECO:0007669"/>
    <property type="project" value="UniProtKB-KW"/>
</dbReference>
<dbReference type="GO" id="GO:0006260">
    <property type="term" value="P:DNA replication"/>
    <property type="evidence" value="ECO:0000315"/>
    <property type="project" value="SGD"/>
</dbReference>
<dbReference type="GO" id="GO:0006270">
    <property type="term" value="P:DNA replication initiation"/>
    <property type="evidence" value="ECO:0000303"/>
    <property type="project" value="ComplexPortal"/>
</dbReference>
<dbReference type="GO" id="GO:0006269">
    <property type="term" value="P:DNA replication, synthesis of primer"/>
    <property type="evidence" value="ECO:0000314"/>
    <property type="project" value="SGD"/>
</dbReference>
<dbReference type="CDD" id="cd04860">
    <property type="entry name" value="AE_Prim_S"/>
    <property type="match status" value="1"/>
</dbReference>
<dbReference type="FunFam" id="3.90.920.10:FF:000003">
    <property type="entry name" value="DNA primase"/>
    <property type="match status" value="1"/>
</dbReference>
<dbReference type="Gene3D" id="3.90.920.10">
    <property type="entry name" value="DNA primase, PRIM domain"/>
    <property type="match status" value="1"/>
</dbReference>
<dbReference type="InterPro" id="IPR002755">
    <property type="entry name" value="DNA_primase_S"/>
</dbReference>
<dbReference type="InterPro" id="IPR014052">
    <property type="entry name" value="DNA_primase_ssu_euk/arc"/>
</dbReference>
<dbReference type="NCBIfam" id="TIGR00335">
    <property type="entry name" value="primase_sml"/>
    <property type="match status" value="1"/>
</dbReference>
<dbReference type="PANTHER" id="PTHR10536">
    <property type="entry name" value="DNA PRIMASE SMALL SUBUNIT"/>
    <property type="match status" value="1"/>
</dbReference>
<dbReference type="Pfam" id="PF01896">
    <property type="entry name" value="DNA_primase_S"/>
    <property type="match status" value="1"/>
</dbReference>
<dbReference type="SUPFAM" id="SSF56747">
    <property type="entry name" value="Prim-pol domain"/>
    <property type="match status" value="1"/>
</dbReference>
<reference key="1">
    <citation type="journal article" date="1987" name="Nucleic Acids Res.">
        <title>The nucleotide sequence of the PRI1 gene related to DNA primase in Saccharomyces cerevisiae.</title>
        <authorList>
            <person name="Plevani P."/>
            <person name="Francesconi S."/>
            <person name="Lucchini G."/>
        </authorList>
    </citation>
    <scope>NUCLEOTIDE SEQUENCE [GENOMIC DNA]</scope>
    <source>
        <strain>DBY939</strain>
    </source>
</reference>
<reference key="2">
    <citation type="journal article" date="1995" name="Yeast">
        <title>Nucleotide sequence and analysis of the centromeric region of yeast chromosome IX.</title>
        <authorList>
            <person name="Voss H."/>
            <person name="Tamames J."/>
            <person name="Teodoru C."/>
            <person name="Valencia A."/>
            <person name="Sensen C."/>
            <person name="Wiemann S."/>
            <person name="Schwager C."/>
            <person name="Zimmermann J."/>
            <person name="Sander C."/>
            <person name="Ansorge W."/>
        </authorList>
    </citation>
    <scope>NUCLEOTIDE SEQUENCE [GENOMIC DNA]</scope>
    <source>
        <strain>ATCC 204508 / S288c</strain>
    </source>
</reference>
<reference key="3">
    <citation type="journal article" date="1997" name="Nature">
        <title>The nucleotide sequence of Saccharomyces cerevisiae chromosome IX.</title>
        <authorList>
            <person name="Churcher C.M."/>
            <person name="Bowman S."/>
            <person name="Badcock K."/>
            <person name="Bankier A.T."/>
            <person name="Brown D."/>
            <person name="Chillingworth T."/>
            <person name="Connor R."/>
            <person name="Devlin K."/>
            <person name="Gentles S."/>
            <person name="Hamlin N."/>
            <person name="Harris D.E."/>
            <person name="Horsnell T."/>
            <person name="Hunt S."/>
            <person name="Jagels K."/>
            <person name="Jones M."/>
            <person name="Lye G."/>
            <person name="Moule S."/>
            <person name="Odell C."/>
            <person name="Pearson D."/>
            <person name="Rajandream M.A."/>
            <person name="Rice P."/>
            <person name="Rowley N."/>
            <person name="Skelton J."/>
            <person name="Smith V."/>
            <person name="Walsh S.V."/>
            <person name="Whitehead S."/>
            <person name="Barrell B.G."/>
        </authorList>
    </citation>
    <scope>NUCLEOTIDE SEQUENCE [LARGE SCALE GENOMIC DNA]</scope>
    <source>
        <strain>ATCC 204508 / S288c</strain>
    </source>
</reference>
<reference key="4">
    <citation type="journal article" date="2014" name="G3 (Bethesda)">
        <title>The reference genome sequence of Saccharomyces cerevisiae: Then and now.</title>
        <authorList>
            <person name="Engel S.R."/>
            <person name="Dietrich F.S."/>
            <person name="Fisk D.G."/>
            <person name="Binkley G."/>
            <person name="Balakrishnan R."/>
            <person name="Costanzo M.C."/>
            <person name="Dwight S.S."/>
            <person name="Hitz B.C."/>
            <person name="Karra K."/>
            <person name="Nash R.S."/>
            <person name="Weng S."/>
            <person name="Wong E.D."/>
            <person name="Lloyd P."/>
            <person name="Skrzypek M.S."/>
            <person name="Miyasato S.R."/>
            <person name="Simison M."/>
            <person name="Cherry J.M."/>
        </authorList>
    </citation>
    <scope>GENOME REANNOTATION</scope>
    <source>
        <strain>ATCC 204508 / S288c</strain>
    </source>
</reference>
<reference key="5">
    <citation type="journal article" date="2007" name="Genome Res.">
        <title>Approaching a complete repository of sequence-verified protein-encoding clones for Saccharomyces cerevisiae.</title>
        <authorList>
            <person name="Hu Y."/>
            <person name="Rolfs A."/>
            <person name="Bhullar B."/>
            <person name="Murthy T.V.S."/>
            <person name="Zhu C."/>
            <person name="Berger M.F."/>
            <person name="Camargo A.A."/>
            <person name="Kelley F."/>
            <person name="McCarron S."/>
            <person name="Jepson D."/>
            <person name="Richardson A."/>
            <person name="Raphael J."/>
            <person name="Moreira D."/>
            <person name="Taycher E."/>
            <person name="Zuo D."/>
            <person name="Mohr S."/>
            <person name="Kane M.F."/>
            <person name="Williamson J."/>
            <person name="Simpson A.J.G."/>
            <person name="Bulyk M.L."/>
            <person name="Harlow E."/>
            <person name="Marsischky G."/>
            <person name="Kolodner R.D."/>
            <person name="LaBaer J."/>
        </authorList>
    </citation>
    <scope>NUCLEOTIDE SEQUENCE [GENOMIC DNA]</scope>
    <source>
        <strain>ATCC 204508 / S288c</strain>
    </source>
</reference>
<reference key="6">
    <citation type="journal article" date="1988" name="Biochim. Biophys. Acta">
        <title>The yeast DNA polymerase-primase complex: genes and proteins.</title>
        <authorList>
            <person name="Plevani P."/>
            <person name="Foiani M."/>
            <person name="Muzi Falconi M."/>
            <person name="Pizzagalli A."/>
            <person name="Santocanale C."/>
            <person name="Francesconi S."/>
            <person name="Valsasnini P."/>
            <person name="Comedini A."/>
            <person name="Piatti S."/>
            <person name="Lucchini G."/>
        </authorList>
    </citation>
    <scope>COMPOSITION OF THE DNA POLYMERASE ALPHA:PRIMASE COMPLEX</scope>
</reference>
<reference key="7">
    <citation type="journal article" date="1991" name="Proc. Natl. Acad. Sci. U.S.A.">
        <title>Mutations in conserved yeast DNA primase domains impair DNA replication in vivo.</title>
        <authorList>
            <person name="Francesconi S."/>
            <person name="Longhese M.P."/>
            <person name="Piseri A."/>
            <person name="Santocanale C."/>
            <person name="Lucchini G."/>
            <person name="Plevani P."/>
        </authorList>
    </citation>
    <scope>MUTAGENESIS</scope>
</reference>
<reference key="8">
    <citation type="journal article" date="2003" name="Nature">
        <title>Global analysis of protein expression in yeast.</title>
        <authorList>
            <person name="Ghaemmaghami S."/>
            <person name="Huh W.-K."/>
            <person name="Bower K."/>
            <person name="Howson R.W."/>
            <person name="Belle A."/>
            <person name="Dephoure N."/>
            <person name="O'Shea E.K."/>
            <person name="Weissman J.S."/>
        </authorList>
    </citation>
    <scope>LEVEL OF PROTEIN EXPRESSION [LARGE SCALE ANALYSIS]</scope>
</reference>
<evidence type="ECO:0000250" key="1"/>
<evidence type="ECO:0000255" key="2"/>
<evidence type="ECO:0000269" key="3">
    <source>
    </source>
</evidence>
<evidence type="ECO:0000269" key="4">
    <source>
    </source>
</evidence>
<evidence type="ECO:0000269" key="5">
    <source>
    </source>
</evidence>
<evidence type="ECO:0000305" key="6"/>
<evidence type="ECO:0007829" key="7">
    <source>
        <dbReference type="PDB" id="4LIM"/>
    </source>
</evidence>
<evidence type="ECO:0007829" key="8">
    <source>
        <dbReference type="PDB" id="4MM2"/>
    </source>
</evidence>
<organism>
    <name type="scientific">Saccharomyces cerevisiae (strain ATCC 204508 / S288c)</name>
    <name type="common">Baker's yeast</name>
    <dbReference type="NCBI Taxonomy" id="559292"/>
    <lineage>
        <taxon>Eukaryota</taxon>
        <taxon>Fungi</taxon>
        <taxon>Dikarya</taxon>
        <taxon>Ascomycota</taxon>
        <taxon>Saccharomycotina</taxon>
        <taxon>Saccharomycetes</taxon>
        <taxon>Saccharomycetales</taxon>
        <taxon>Saccharomycetaceae</taxon>
        <taxon>Saccharomyces</taxon>
    </lineage>
</organism>
<name>PRI1_YEAST</name>
<protein>
    <recommendedName>
        <fullName>DNA primase small subunit</fullName>
        <ecNumber>2.7.7.-</ecNumber>
    </recommendedName>
    <alternativeName>
        <fullName>DNA polymerase alpha:primase complex p48 subunit</fullName>
        <shortName>DNA polymerase-primase complex p48 subunit</shortName>
        <shortName>Pol alpha-primase complex p48 subunit</shortName>
    </alternativeName>
    <alternativeName>
        <fullName>DNA primase 48 kDa subunit</fullName>
    </alternativeName>
</protein>
<gene>
    <name type="primary">PRI1</name>
    <name type="ordered locus">YIR008C</name>
    <name type="ORF">YIB8C</name>
</gene>
<sequence length="409" mass="47690">MTNSVKTNGPSSSDMEYYYKSLYPFKHIFNWLNHSPKPSRDMINREFAMAFRSGAYKRYNSFNSVQDFKAQIEKANPDRFEIGAIYNKPPRERDTLLKSELKALEKELVFDIDMDDYDAFRTCCSGAQVCSKCWKFISLAMKITNTALREDFGYKDFIWVFSGRRGAHCWVSDKRARALTDVQRRNVLDYVNVIRDRNTDKRLALKRPYHPHLARSLEQLKPFFVSIMLEEQNPWEDDQHAIQTLLPALYDKQLIDSLKKYWLDNPRRSSKEKWNDIDQIATSLFKGPKQDSHIIKLRECKEDLVLMTLYPKLDVEVTKQTIHLLKAPFCIHPATGNVCVPIDESFAPEKAPKLIDLQTEMEKNNDVSLTALQPFINQFQAYVSSLLKNELGSVKREREDDDEPASLDF</sequence>